<name>CWC2_MYCMD</name>
<organism>
    <name type="scientific">Mycosarcoma maydis</name>
    <name type="common">Corn smut fungus</name>
    <name type="synonym">Ustilago maydis</name>
    <dbReference type="NCBI Taxonomy" id="5270"/>
    <lineage>
        <taxon>Eukaryota</taxon>
        <taxon>Fungi</taxon>
        <taxon>Dikarya</taxon>
        <taxon>Basidiomycota</taxon>
        <taxon>Ustilaginomycotina</taxon>
        <taxon>Ustilaginomycetes</taxon>
        <taxon>Ustilaginales</taxon>
        <taxon>Ustilaginaceae</taxon>
        <taxon>Mycosarcoma</taxon>
    </lineage>
</organism>
<proteinExistence type="inferred from homology"/>
<sequence>MSETQAQGVQSPGQVASTSYQPRPARKQVTQAKFDAIREAFSARPDSAGTFNIWYENFAGVDREENEAQKAKRETRCDIARDSGYTRADITLKTQAARIQQGAPVAPDEAVYCCIHFARGCCPHGAECNFLHRLPRPNDYPSQGRDCFGREKLGNYKDDMSGTGSLSKVNRTLYVGRIHEEHGVSSPSAPANSAWRDGGKTLKGGRSIHDVRNKNGPRPRQDPKSYRPQHNSVRPETDNATERVVRRHFSEWGEIDRLRVLTGRSCAFVTFKYEANAQFAKEAMLNQSLDHNEIINVRWASDDPNPAAQKRNQEQMRRAGERAIMAGMSEQAIQAQQALRALEGLEHQRGEDADSKRRRISHQSYDEDMRRLEEENERGWVEFAQERQAAVAAAPTSQAPSAASSASKNNITGSLLNSETMSHLASLQNLDQKQGGASDTYPPPVSSNGLGSLAGYGSDSEDDDS</sequence>
<keyword id="KW-0131">Cell cycle</keyword>
<keyword id="KW-0479">Metal-binding</keyword>
<keyword id="KW-0507">mRNA processing</keyword>
<keyword id="KW-0508">mRNA splicing</keyword>
<keyword id="KW-0539">Nucleus</keyword>
<keyword id="KW-1185">Reference proteome</keyword>
<keyword id="KW-0694">RNA-binding</keyword>
<keyword id="KW-0747">Spliceosome</keyword>
<keyword id="KW-0862">Zinc</keyword>
<keyword id="KW-0863">Zinc-finger</keyword>
<feature type="chain" id="PRO_0000081550" description="Pre-mRNA-splicing factor CWC2">
    <location>
        <begin position="1"/>
        <end position="465"/>
    </location>
</feature>
<feature type="domain" description="RRM" evidence="2">
    <location>
        <begin position="227"/>
        <end position="302"/>
    </location>
</feature>
<feature type="zinc finger region" description="C3H1-type" evidence="3">
    <location>
        <begin position="113"/>
        <end position="135"/>
    </location>
</feature>
<feature type="region of interest" description="Disordered" evidence="4">
    <location>
        <begin position="1"/>
        <end position="28"/>
    </location>
</feature>
<feature type="region of interest" description="Disordered" evidence="4">
    <location>
        <begin position="181"/>
        <end position="241"/>
    </location>
</feature>
<feature type="region of interest" description="Disordered" evidence="4">
    <location>
        <begin position="346"/>
        <end position="371"/>
    </location>
</feature>
<feature type="region of interest" description="Disordered" evidence="4">
    <location>
        <begin position="391"/>
        <end position="465"/>
    </location>
</feature>
<feature type="compositionally biased region" description="Polar residues" evidence="4">
    <location>
        <begin position="1"/>
        <end position="21"/>
    </location>
</feature>
<feature type="compositionally biased region" description="Basic and acidic residues" evidence="4">
    <location>
        <begin position="207"/>
        <end position="225"/>
    </location>
</feature>
<feature type="compositionally biased region" description="Basic and acidic residues" evidence="4">
    <location>
        <begin position="346"/>
        <end position="355"/>
    </location>
</feature>
<feature type="compositionally biased region" description="Low complexity" evidence="4">
    <location>
        <begin position="391"/>
        <end position="407"/>
    </location>
</feature>
<feature type="compositionally biased region" description="Polar residues" evidence="4">
    <location>
        <begin position="408"/>
        <end position="437"/>
    </location>
</feature>
<accession>Q4PA86</accession>
<accession>A0A0D1CR11</accession>
<protein>
    <recommendedName>
        <fullName>Pre-mRNA-splicing factor CWC2</fullName>
    </recommendedName>
</protein>
<comment type="function">
    <text evidence="1">Involved in the first step of pre-mRNA splicing. Required for cell growth and cell cycle control. Plays a role in the levels of the U1, U4, U5 and U6 snRNAs and the maintenance of the U4/U6 snRNA complex. May provide the link between the 'nineteen complex' NTC spliceosome protein complex and the spliceosome through the U6 snRNA. Associates predominantly with U6 snRNAs in assembled active spliceosomes. Binds directly to the internal stem-loop (ISL) domain of the U6 snRNA and to the pre-mRNA intron near the 5' splice site during the activation and catalytic phases of the spliceosome cycle (By similarity).</text>
</comment>
<comment type="subunit">
    <text evidence="1">Associated with the spliceosome.</text>
</comment>
<comment type="subcellular location">
    <subcellularLocation>
        <location evidence="1">Nucleus</location>
    </subcellularLocation>
</comment>
<comment type="domain">
    <text evidence="1">The C-terminal RRM domain and the zinc finger motif are necessary for RNA-binding.</text>
</comment>
<comment type="similarity">
    <text evidence="5">Belongs to the RRM CWC2 family.</text>
</comment>
<dbReference type="EMBL" id="CM003146">
    <property type="protein sequence ID" value="KIS68998.1"/>
    <property type="molecule type" value="Genomic_DNA"/>
</dbReference>
<dbReference type="RefSeq" id="XP_011389582.1">
    <property type="nucleotide sequence ID" value="XM_011391280.1"/>
</dbReference>
<dbReference type="SMR" id="Q4PA86"/>
<dbReference type="FunCoup" id="Q4PA86">
    <property type="interactions" value="61"/>
</dbReference>
<dbReference type="STRING" id="237631.Q4PA86"/>
<dbReference type="EnsemblFungi" id="KIS68998">
    <property type="protein sequence ID" value="KIS68998"/>
    <property type="gene ID" value="UMAG_12203"/>
</dbReference>
<dbReference type="GeneID" id="23567956"/>
<dbReference type="KEGG" id="uma:UMAG_12203"/>
<dbReference type="VEuPathDB" id="FungiDB:UMAG_12203"/>
<dbReference type="eggNOG" id="KOG0118">
    <property type="taxonomic scope" value="Eukaryota"/>
</dbReference>
<dbReference type="HOGENOM" id="CLU_043308_1_1_1"/>
<dbReference type="InParanoid" id="Q4PA86"/>
<dbReference type="OrthoDB" id="10251848at2759"/>
<dbReference type="Proteomes" id="UP000000561">
    <property type="component" value="Chromosome 7"/>
</dbReference>
<dbReference type="GO" id="GO:0000974">
    <property type="term" value="C:Prp19 complex"/>
    <property type="evidence" value="ECO:0000250"/>
    <property type="project" value="UniProtKB"/>
</dbReference>
<dbReference type="GO" id="GO:0071006">
    <property type="term" value="C:U2-type catalytic step 1 spliceosome"/>
    <property type="evidence" value="ECO:0000318"/>
    <property type="project" value="GO_Central"/>
</dbReference>
<dbReference type="GO" id="GO:0071007">
    <property type="term" value="C:U2-type catalytic step 2 spliceosome"/>
    <property type="evidence" value="ECO:0000318"/>
    <property type="project" value="GO_Central"/>
</dbReference>
<dbReference type="GO" id="GO:0036002">
    <property type="term" value="F:pre-mRNA binding"/>
    <property type="evidence" value="ECO:0000250"/>
    <property type="project" value="UniProtKB"/>
</dbReference>
<dbReference type="GO" id="GO:0017070">
    <property type="term" value="F:U6 snRNA binding"/>
    <property type="evidence" value="ECO:0000250"/>
    <property type="project" value="UniProtKB"/>
</dbReference>
<dbReference type="GO" id="GO:0008270">
    <property type="term" value="F:zinc ion binding"/>
    <property type="evidence" value="ECO:0007669"/>
    <property type="project" value="UniProtKB-KW"/>
</dbReference>
<dbReference type="GO" id="GO:0045292">
    <property type="term" value="P:mRNA cis splicing, via spliceosome"/>
    <property type="evidence" value="ECO:0000250"/>
    <property type="project" value="UniProtKB"/>
</dbReference>
<dbReference type="GO" id="GO:0045787">
    <property type="term" value="P:positive regulation of cell cycle"/>
    <property type="evidence" value="ECO:0000250"/>
    <property type="project" value="UniProtKB"/>
</dbReference>
<dbReference type="GO" id="GO:0033120">
    <property type="term" value="P:positive regulation of RNA splicing"/>
    <property type="evidence" value="ECO:0000250"/>
    <property type="project" value="UniProtKB"/>
</dbReference>
<dbReference type="GO" id="GO:0000387">
    <property type="term" value="P:spliceosomal snRNP assembly"/>
    <property type="evidence" value="ECO:0000250"/>
    <property type="project" value="UniProtKB"/>
</dbReference>
<dbReference type="CDD" id="cd12360">
    <property type="entry name" value="RRM_cwf2"/>
    <property type="match status" value="1"/>
</dbReference>
<dbReference type="Gene3D" id="3.30.70.330">
    <property type="match status" value="1"/>
</dbReference>
<dbReference type="InterPro" id="IPR039171">
    <property type="entry name" value="Cwc2/Slt11"/>
</dbReference>
<dbReference type="InterPro" id="IPR034181">
    <property type="entry name" value="Cwc2_RRM"/>
</dbReference>
<dbReference type="InterPro" id="IPR012677">
    <property type="entry name" value="Nucleotide-bd_a/b_plait_sf"/>
</dbReference>
<dbReference type="InterPro" id="IPR035979">
    <property type="entry name" value="RBD_domain_sf"/>
</dbReference>
<dbReference type="InterPro" id="IPR000504">
    <property type="entry name" value="RRM_dom"/>
</dbReference>
<dbReference type="InterPro" id="IPR032297">
    <property type="entry name" value="Torus"/>
</dbReference>
<dbReference type="InterPro" id="IPR000571">
    <property type="entry name" value="Znf_CCCH"/>
</dbReference>
<dbReference type="PANTHER" id="PTHR14089:SF2">
    <property type="entry name" value="PRE-MRNA-SPLICING FACTOR CWC2"/>
    <property type="match status" value="1"/>
</dbReference>
<dbReference type="PANTHER" id="PTHR14089">
    <property type="entry name" value="PRE-MRNA-SPLICING FACTOR RBM22"/>
    <property type="match status" value="1"/>
</dbReference>
<dbReference type="Pfam" id="PF00076">
    <property type="entry name" value="RRM_1"/>
    <property type="match status" value="1"/>
</dbReference>
<dbReference type="Pfam" id="PF16131">
    <property type="entry name" value="Torus"/>
    <property type="match status" value="1"/>
</dbReference>
<dbReference type="SMART" id="SM00360">
    <property type="entry name" value="RRM"/>
    <property type="match status" value="1"/>
</dbReference>
<dbReference type="SUPFAM" id="SSF54928">
    <property type="entry name" value="RNA-binding domain, RBD"/>
    <property type="match status" value="1"/>
</dbReference>
<dbReference type="PROSITE" id="PS50102">
    <property type="entry name" value="RRM"/>
    <property type="match status" value="1"/>
</dbReference>
<dbReference type="PROSITE" id="PS50103">
    <property type="entry name" value="ZF_C3H1"/>
    <property type="match status" value="1"/>
</dbReference>
<gene>
    <name type="primary">CWC2</name>
    <name type="ORF">UMAG_12203</name>
</gene>
<reference key="1">
    <citation type="journal article" date="2006" name="Nature">
        <title>Insights from the genome of the biotrophic fungal plant pathogen Ustilago maydis.</title>
        <authorList>
            <person name="Kaemper J."/>
            <person name="Kahmann R."/>
            <person name="Boelker M."/>
            <person name="Ma L.-J."/>
            <person name="Brefort T."/>
            <person name="Saville B.J."/>
            <person name="Banuett F."/>
            <person name="Kronstad J.W."/>
            <person name="Gold S.E."/>
            <person name="Mueller O."/>
            <person name="Perlin M.H."/>
            <person name="Woesten H.A.B."/>
            <person name="de Vries R."/>
            <person name="Ruiz-Herrera J."/>
            <person name="Reynaga-Pena C.G."/>
            <person name="Snetselaar K."/>
            <person name="McCann M."/>
            <person name="Perez-Martin J."/>
            <person name="Feldbruegge M."/>
            <person name="Basse C.W."/>
            <person name="Steinberg G."/>
            <person name="Ibeas J.I."/>
            <person name="Holloman W."/>
            <person name="Guzman P."/>
            <person name="Farman M.L."/>
            <person name="Stajich J.E."/>
            <person name="Sentandreu R."/>
            <person name="Gonzalez-Prieto J.M."/>
            <person name="Kennell J.C."/>
            <person name="Molina L."/>
            <person name="Schirawski J."/>
            <person name="Mendoza-Mendoza A."/>
            <person name="Greilinger D."/>
            <person name="Muench K."/>
            <person name="Roessel N."/>
            <person name="Scherer M."/>
            <person name="Vranes M."/>
            <person name="Ladendorf O."/>
            <person name="Vincon V."/>
            <person name="Fuchs U."/>
            <person name="Sandrock B."/>
            <person name="Meng S."/>
            <person name="Ho E.C.H."/>
            <person name="Cahill M.J."/>
            <person name="Boyce K.J."/>
            <person name="Klose J."/>
            <person name="Klosterman S.J."/>
            <person name="Deelstra H.J."/>
            <person name="Ortiz-Castellanos L."/>
            <person name="Li W."/>
            <person name="Sanchez-Alonso P."/>
            <person name="Schreier P.H."/>
            <person name="Haeuser-Hahn I."/>
            <person name="Vaupel M."/>
            <person name="Koopmann E."/>
            <person name="Friedrich G."/>
            <person name="Voss H."/>
            <person name="Schlueter T."/>
            <person name="Margolis J."/>
            <person name="Platt D."/>
            <person name="Swimmer C."/>
            <person name="Gnirke A."/>
            <person name="Chen F."/>
            <person name="Vysotskaia V."/>
            <person name="Mannhaupt G."/>
            <person name="Gueldener U."/>
            <person name="Muensterkoetter M."/>
            <person name="Haase D."/>
            <person name="Oesterheld M."/>
            <person name="Mewes H.-W."/>
            <person name="Mauceli E.W."/>
            <person name="DeCaprio D."/>
            <person name="Wade C.M."/>
            <person name="Butler J."/>
            <person name="Young S.K."/>
            <person name="Jaffe D.B."/>
            <person name="Calvo S.E."/>
            <person name="Nusbaum C."/>
            <person name="Galagan J.E."/>
            <person name="Birren B.W."/>
        </authorList>
    </citation>
    <scope>NUCLEOTIDE SEQUENCE [LARGE SCALE GENOMIC DNA]</scope>
    <source>
        <strain>DSM 14603 / FGSC 9021 / UM521</strain>
    </source>
</reference>
<reference key="2">
    <citation type="submission" date="2014-09" db="EMBL/GenBank/DDBJ databases">
        <authorList>
            <person name="Gueldener U."/>
            <person name="Muensterkoetter M."/>
            <person name="Walter M.C."/>
            <person name="Mannhaupt G."/>
            <person name="Kahmann R."/>
        </authorList>
    </citation>
    <scope>GENOME REANNOTATION</scope>
    <source>
        <strain>DSM 14603 / FGSC 9021 / UM521</strain>
    </source>
</reference>
<evidence type="ECO:0000250" key="1"/>
<evidence type="ECO:0000255" key="2">
    <source>
        <dbReference type="PROSITE-ProRule" id="PRU00176"/>
    </source>
</evidence>
<evidence type="ECO:0000255" key="3">
    <source>
        <dbReference type="PROSITE-ProRule" id="PRU00723"/>
    </source>
</evidence>
<evidence type="ECO:0000256" key="4">
    <source>
        <dbReference type="SAM" id="MobiDB-lite"/>
    </source>
</evidence>
<evidence type="ECO:0000305" key="5"/>